<name>RL19_EHRRW</name>
<organism>
    <name type="scientific">Ehrlichia ruminantium (strain Welgevonden)</name>
    <dbReference type="NCBI Taxonomy" id="254945"/>
    <lineage>
        <taxon>Bacteria</taxon>
        <taxon>Pseudomonadati</taxon>
        <taxon>Pseudomonadota</taxon>
        <taxon>Alphaproteobacteria</taxon>
        <taxon>Rickettsiales</taxon>
        <taxon>Anaplasmataceae</taxon>
        <taxon>Ehrlichia</taxon>
    </lineage>
</organism>
<feature type="chain" id="PRO_0000226848" description="Large ribosomal subunit protein bL19">
    <location>
        <begin position="1"/>
        <end position="125"/>
    </location>
</feature>
<keyword id="KW-0687">Ribonucleoprotein</keyword>
<keyword id="KW-0689">Ribosomal protein</keyword>
<reference key="1">
    <citation type="journal article" date="2005" name="Proc. Natl. Acad. Sci. U.S.A.">
        <title>The genome of the heartwater agent Ehrlichia ruminantium contains multiple tandem repeats of actively variable copy number.</title>
        <authorList>
            <person name="Collins N.E."/>
            <person name="Liebenberg J."/>
            <person name="de Villiers E.P."/>
            <person name="Brayton K.A."/>
            <person name="Louw E."/>
            <person name="Pretorius A."/>
            <person name="Faber F.E."/>
            <person name="van Heerden H."/>
            <person name="Josemans A."/>
            <person name="van Kleef M."/>
            <person name="Steyn H.C."/>
            <person name="van Strijp M.F."/>
            <person name="Zweygarth E."/>
            <person name="Jongejan F."/>
            <person name="Maillard J.C."/>
            <person name="Berthier D."/>
            <person name="Botha M."/>
            <person name="Joubert F."/>
            <person name="Corton C.H."/>
            <person name="Thomson N.R."/>
            <person name="Allsopp M.T."/>
            <person name="Allsopp B.A."/>
        </authorList>
    </citation>
    <scope>NUCLEOTIDE SEQUENCE [LARGE SCALE GENOMIC DNA]</scope>
    <source>
        <strain>Welgevonden</strain>
    </source>
</reference>
<reference key="2">
    <citation type="journal article" date="2006" name="J. Bacteriol.">
        <title>Comparative genomic analysis of three strains of Ehrlichia ruminantium reveals an active process of genome size plasticity.</title>
        <authorList>
            <person name="Frutos R."/>
            <person name="Viari A."/>
            <person name="Ferraz C."/>
            <person name="Morgat A."/>
            <person name="Eychenie S."/>
            <person name="Kandassamy Y."/>
            <person name="Chantal I."/>
            <person name="Bensaid A."/>
            <person name="Coissac E."/>
            <person name="Vachiery N."/>
            <person name="Demaille J."/>
            <person name="Martinez D."/>
        </authorList>
    </citation>
    <scope>NUCLEOTIDE SEQUENCE [LARGE SCALE GENOMIC DNA]</scope>
    <source>
        <strain>Welgevonden</strain>
    </source>
</reference>
<dbReference type="EMBL" id="CR767821">
    <property type="protein sequence ID" value="CAH58622.1"/>
    <property type="molecule type" value="Genomic_DNA"/>
</dbReference>
<dbReference type="EMBL" id="CR925678">
    <property type="protein sequence ID" value="CAI27432.1"/>
    <property type="status" value="ALT_INIT"/>
    <property type="molecule type" value="Genomic_DNA"/>
</dbReference>
<dbReference type="RefSeq" id="WP_011155565.1">
    <property type="nucleotide sequence ID" value="NC_005295.2"/>
</dbReference>
<dbReference type="SMR" id="Q5H9Z6"/>
<dbReference type="GeneID" id="33058286"/>
<dbReference type="KEGG" id="eru:Erum8870"/>
<dbReference type="KEGG" id="erw:ERWE_CDS_09380"/>
<dbReference type="eggNOG" id="COG0335">
    <property type="taxonomic scope" value="Bacteria"/>
</dbReference>
<dbReference type="HOGENOM" id="CLU_103507_2_1_5"/>
<dbReference type="Proteomes" id="UP000001021">
    <property type="component" value="Chromosome"/>
</dbReference>
<dbReference type="GO" id="GO:0022625">
    <property type="term" value="C:cytosolic large ribosomal subunit"/>
    <property type="evidence" value="ECO:0007669"/>
    <property type="project" value="TreeGrafter"/>
</dbReference>
<dbReference type="GO" id="GO:0003735">
    <property type="term" value="F:structural constituent of ribosome"/>
    <property type="evidence" value="ECO:0007669"/>
    <property type="project" value="InterPro"/>
</dbReference>
<dbReference type="GO" id="GO:0006412">
    <property type="term" value="P:translation"/>
    <property type="evidence" value="ECO:0007669"/>
    <property type="project" value="UniProtKB-UniRule"/>
</dbReference>
<dbReference type="Gene3D" id="2.30.30.790">
    <property type="match status" value="1"/>
</dbReference>
<dbReference type="HAMAP" id="MF_00402">
    <property type="entry name" value="Ribosomal_bL19"/>
    <property type="match status" value="1"/>
</dbReference>
<dbReference type="InterPro" id="IPR001857">
    <property type="entry name" value="Ribosomal_bL19"/>
</dbReference>
<dbReference type="InterPro" id="IPR038657">
    <property type="entry name" value="Ribosomal_bL19_sf"/>
</dbReference>
<dbReference type="InterPro" id="IPR008991">
    <property type="entry name" value="Translation_prot_SH3-like_sf"/>
</dbReference>
<dbReference type="NCBIfam" id="TIGR01024">
    <property type="entry name" value="rplS_bact"/>
    <property type="match status" value="1"/>
</dbReference>
<dbReference type="PANTHER" id="PTHR15680:SF9">
    <property type="entry name" value="LARGE RIBOSOMAL SUBUNIT PROTEIN BL19M"/>
    <property type="match status" value="1"/>
</dbReference>
<dbReference type="PANTHER" id="PTHR15680">
    <property type="entry name" value="RIBOSOMAL PROTEIN L19"/>
    <property type="match status" value="1"/>
</dbReference>
<dbReference type="Pfam" id="PF01245">
    <property type="entry name" value="Ribosomal_L19"/>
    <property type="match status" value="1"/>
</dbReference>
<dbReference type="PIRSF" id="PIRSF002191">
    <property type="entry name" value="Ribosomal_L19"/>
    <property type="match status" value="1"/>
</dbReference>
<dbReference type="PRINTS" id="PR00061">
    <property type="entry name" value="RIBOSOMALL19"/>
</dbReference>
<dbReference type="SUPFAM" id="SSF50104">
    <property type="entry name" value="Translation proteins SH3-like domain"/>
    <property type="match status" value="1"/>
</dbReference>
<sequence length="125" mass="14586">MSNLLKEFNEQQIKLLSNREIPKFKSGDTLRVTMKIFDSAGERIQTFEGVCIKRRNNGLHSSFTLRKISYNESIQLQVFLYSPTIESIEVVKFGKVRRAKLYYMLSLFGKSARIKERIDRSKKSS</sequence>
<accession>Q5H9Z6</accession>
<accession>Q5FCC5</accession>
<gene>
    <name evidence="1" type="primary">rplS</name>
    <name type="ordered locus">Erum8870</name>
    <name type="ordered locus">ERWE_CDS_09380</name>
</gene>
<evidence type="ECO:0000255" key="1">
    <source>
        <dbReference type="HAMAP-Rule" id="MF_00402"/>
    </source>
</evidence>
<evidence type="ECO:0000305" key="2"/>
<proteinExistence type="inferred from homology"/>
<comment type="function">
    <text evidence="1">This protein is located at the 30S-50S ribosomal subunit interface and may play a role in the structure and function of the aminoacyl-tRNA binding site.</text>
</comment>
<comment type="similarity">
    <text evidence="1">Belongs to the bacterial ribosomal protein bL19 family.</text>
</comment>
<comment type="sequence caution" evidence="2">
    <conflict type="erroneous initiation">
        <sequence resource="EMBL-CDS" id="CAI27432"/>
    </conflict>
</comment>
<protein>
    <recommendedName>
        <fullName evidence="1">Large ribosomal subunit protein bL19</fullName>
    </recommendedName>
    <alternativeName>
        <fullName evidence="2">50S ribosomal protein L19</fullName>
    </alternativeName>
</protein>